<dbReference type="EMBL" id="AWZP01003783">
    <property type="status" value="NOT_ANNOTATED_CDS"/>
    <property type="molecule type" value="Genomic_DNA"/>
</dbReference>
<dbReference type="RefSeq" id="XP_007101327.1">
    <property type="nucleotide sequence ID" value="XM_007101265.3"/>
</dbReference>
<dbReference type="SMR" id="P0DMM0"/>
<dbReference type="FunCoup" id="P0DMM0">
    <property type="interactions" value="247"/>
</dbReference>
<dbReference type="STRING" id="9755.ENSPCTP00005026101"/>
<dbReference type="GeneID" id="102995691"/>
<dbReference type="KEGG" id="pcad:102995691"/>
<dbReference type="CTD" id="348"/>
<dbReference type="InParanoid" id="P0DMM0"/>
<dbReference type="OrthoDB" id="9048614at2759"/>
<dbReference type="Proteomes" id="UP000248484">
    <property type="component" value="Chromosome 17"/>
</dbReference>
<dbReference type="GO" id="GO:0034360">
    <property type="term" value="C:chylomicron remnant"/>
    <property type="evidence" value="ECO:0007669"/>
    <property type="project" value="Ensembl"/>
</dbReference>
<dbReference type="GO" id="GO:0005783">
    <property type="term" value="C:endoplasmic reticulum"/>
    <property type="evidence" value="ECO:0007669"/>
    <property type="project" value="Ensembl"/>
</dbReference>
<dbReference type="GO" id="GO:0070062">
    <property type="term" value="C:extracellular exosome"/>
    <property type="evidence" value="ECO:0000250"/>
    <property type="project" value="UniProtKB"/>
</dbReference>
<dbReference type="GO" id="GO:0031012">
    <property type="term" value="C:extracellular matrix"/>
    <property type="evidence" value="ECO:0000250"/>
    <property type="project" value="UniProtKB"/>
</dbReference>
<dbReference type="GO" id="GO:0005615">
    <property type="term" value="C:extracellular space"/>
    <property type="evidence" value="ECO:0000250"/>
    <property type="project" value="UniProtKB"/>
</dbReference>
<dbReference type="GO" id="GO:0098978">
    <property type="term" value="C:glutamatergic synapse"/>
    <property type="evidence" value="ECO:0007669"/>
    <property type="project" value="Ensembl"/>
</dbReference>
<dbReference type="GO" id="GO:0005794">
    <property type="term" value="C:Golgi apparatus"/>
    <property type="evidence" value="ECO:0007669"/>
    <property type="project" value="Ensembl"/>
</dbReference>
<dbReference type="GO" id="GO:0034364">
    <property type="term" value="C:high-density lipoprotein particle"/>
    <property type="evidence" value="ECO:0000250"/>
    <property type="project" value="UniProtKB"/>
</dbReference>
<dbReference type="GO" id="GO:0034363">
    <property type="term" value="C:intermediate-density lipoprotein particle"/>
    <property type="evidence" value="ECO:0000250"/>
    <property type="project" value="UniProtKB"/>
</dbReference>
<dbReference type="GO" id="GO:0034362">
    <property type="term" value="C:low-density lipoprotein particle"/>
    <property type="evidence" value="ECO:0000250"/>
    <property type="project" value="UniProtKB"/>
</dbReference>
<dbReference type="GO" id="GO:0042470">
    <property type="term" value="C:melanosome"/>
    <property type="evidence" value="ECO:0007669"/>
    <property type="project" value="Ensembl"/>
</dbReference>
<dbReference type="GO" id="GO:0097487">
    <property type="term" value="C:multivesicular body, internal vesicle"/>
    <property type="evidence" value="ECO:0000250"/>
    <property type="project" value="UniProtKB"/>
</dbReference>
<dbReference type="GO" id="GO:0005886">
    <property type="term" value="C:plasma membrane"/>
    <property type="evidence" value="ECO:0007669"/>
    <property type="project" value="GOC"/>
</dbReference>
<dbReference type="GO" id="GO:0043083">
    <property type="term" value="C:synaptic cleft"/>
    <property type="evidence" value="ECO:0007669"/>
    <property type="project" value="Ensembl"/>
</dbReference>
<dbReference type="GO" id="GO:0034361">
    <property type="term" value="C:very-low-density lipoprotein particle"/>
    <property type="evidence" value="ECO:0000250"/>
    <property type="project" value="UniProtKB"/>
</dbReference>
<dbReference type="GO" id="GO:0001540">
    <property type="term" value="F:amyloid-beta binding"/>
    <property type="evidence" value="ECO:0007669"/>
    <property type="project" value="Ensembl"/>
</dbReference>
<dbReference type="GO" id="GO:0016209">
    <property type="term" value="F:antioxidant activity"/>
    <property type="evidence" value="ECO:0007669"/>
    <property type="project" value="Ensembl"/>
</dbReference>
<dbReference type="GO" id="GO:0120020">
    <property type="term" value="F:cholesterol transfer activity"/>
    <property type="evidence" value="ECO:0007669"/>
    <property type="project" value="TreeGrafter"/>
</dbReference>
<dbReference type="GO" id="GO:0019899">
    <property type="term" value="F:enzyme binding"/>
    <property type="evidence" value="ECO:0007669"/>
    <property type="project" value="Ensembl"/>
</dbReference>
<dbReference type="GO" id="GO:0043395">
    <property type="term" value="F:heparan sulfate proteoglycan binding"/>
    <property type="evidence" value="ECO:0000250"/>
    <property type="project" value="UniProtKB"/>
</dbReference>
<dbReference type="GO" id="GO:0008201">
    <property type="term" value="F:heparin binding"/>
    <property type="evidence" value="ECO:0000250"/>
    <property type="project" value="UniProtKB"/>
</dbReference>
<dbReference type="GO" id="GO:0042802">
    <property type="term" value="F:identical protein binding"/>
    <property type="evidence" value="ECO:0000250"/>
    <property type="project" value="UniProtKB"/>
</dbReference>
<dbReference type="GO" id="GO:0050750">
    <property type="term" value="F:low-density lipoprotein particle receptor binding"/>
    <property type="evidence" value="ECO:0000250"/>
    <property type="project" value="UniProtKB"/>
</dbReference>
<dbReference type="GO" id="GO:0046911">
    <property type="term" value="F:metal chelating activity"/>
    <property type="evidence" value="ECO:0007669"/>
    <property type="project" value="Ensembl"/>
</dbReference>
<dbReference type="GO" id="GO:0060228">
    <property type="term" value="F:phosphatidylcholine-sterol O-acyltransferase activator activity"/>
    <property type="evidence" value="ECO:0007669"/>
    <property type="project" value="Ensembl"/>
</dbReference>
<dbReference type="GO" id="GO:0005543">
    <property type="term" value="F:phospholipid binding"/>
    <property type="evidence" value="ECO:0007669"/>
    <property type="project" value="Ensembl"/>
</dbReference>
<dbReference type="GO" id="GO:0042803">
    <property type="term" value="F:protein homodimerization activity"/>
    <property type="evidence" value="ECO:0007669"/>
    <property type="project" value="Ensembl"/>
</dbReference>
<dbReference type="GO" id="GO:0044877">
    <property type="term" value="F:protein-containing complex binding"/>
    <property type="evidence" value="ECO:0007669"/>
    <property type="project" value="Ensembl"/>
</dbReference>
<dbReference type="GO" id="GO:0048018">
    <property type="term" value="F:receptor ligand activity"/>
    <property type="evidence" value="ECO:0007669"/>
    <property type="project" value="Ensembl"/>
</dbReference>
<dbReference type="GO" id="GO:0048156">
    <property type="term" value="F:tau protein binding"/>
    <property type="evidence" value="ECO:0007669"/>
    <property type="project" value="Ensembl"/>
</dbReference>
<dbReference type="GO" id="GO:0070326">
    <property type="term" value="F:very-low-density lipoprotein particle receptor binding"/>
    <property type="evidence" value="ECO:0007669"/>
    <property type="project" value="Ensembl"/>
</dbReference>
<dbReference type="GO" id="GO:0055090">
    <property type="term" value="P:acylglycerol homeostasis"/>
    <property type="evidence" value="ECO:0007669"/>
    <property type="project" value="TreeGrafter"/>
</dbReference>
<dbReference type="GO" id="GO:0097113">
    <property type="term" value="P:AMPA glutamate receptor clustering"/>
    <property type="evidence" value="ECO:0007669"/>
    <property type="project" value="Ensembl"/>
</dbReference>
<dbReference type="GO" id="GO:0042982">
    <property type="term" value="P:amyloid precursor protein metabolic process"/>
    <property type="evidence" value="ECO:0007669"/>
    <property type="project" value="Ensembl"/>
</dbReference>
<dbReference type="GO" id="GO:0071402">
    <property type="term" value="P:cellular response to lipoprotein particle stimulus"/>
    <property type="evidence" value="ECO:0007669"/>
    <property type="project" value="Ensembl"/>
</dbReference>
<dbReference type="GO" id="GO:0033344">
    <property type="term" value="P:cholesterol efflux"/>
    <property type="evidence" value="ECO:0000250"/>
    <property type="project" value="UniProtKB"/>
</dbReference>
<dbReference type="GO" id="GO:0042632">
    <property type="term" value="P:cholesterol homeostasis"/>
    <property type="evidence" value="ECO:0007669"/>
    <property type="project" value="Ensembl"/>
</dbReference>
<dbReference type="GO" id="GO:0008203">
    <property type="term" value="P:cholesterol metabolic process"/>
    <property type="evidence" value="ECO:0007669"/>
    <property type="project" value="Ensembl"/>
</dbReference>
<dbReference type="GO" id="GO:0034382">
    <property type="term" value="P:chylomicron remnant clearance"/>
    <property type="evidence" value="ECO:0000250"/>
    <property type="project" value="UniProtKB"/>
</dbReference>
<dbReference type="GO" id="GO:0055089">
    <property type="term" value="P:fatty acid homeostasis"/>
    <property type="evidence" value="ECO:0007669"/>
    <property type="project" value="Ensembl"/>
</dbReference>
<dbReference type="GO" id="GO:0007186">
    <property type="term" value="P:G protein-coupled receptor signaling pathway"/>
    <property type="evidence" value="ECO:0007669"/>
    <property type="project" value="Ensembl"/>
</dbReference>
<dbReference type="GO" id="GO:0034380">
    <property type="term" value="P:high-density lipoprotein particle assembly"/>
    <property type="evidence" value="ECO:0000250"/>
    <property type="project" value="UniProtKB"/>
</dbReference>
<dbReference type="GO" id="GO:0034384">
    <property type="term" value="P:high-density lipoprotein particle clearance"/>
    <property type="evidence" value="ECO:0007669"/>
    <property type="project" value="Ensembl"/>
</dbReference>
<dbReference type="GO" id="GO:0034375">
    <property type="term" value="P:high-density lipoprotein particle remodeling"/>
    <property type="evidence" value="ECO:0007669"/>
    <property type="project" value="Ensembl"/>
</dbReference>
<dbReference type="GO" id="GO:0071831">
    <property type="term" value="P:intermediate-density lipoprotein particle clearance"/>
    <property type="evidence" value="ECO:0000250"/>
    <property type="project" value="UniProtKB"/>
</dbReference>
<dbReference type="GO" id="GO:0042158">
    <property type="term" value="P:lipoprotein biosynthetic process"/>
    <property type="evidence" value="ECO:0000250"/>
    <property type="project" value="UniProtKB"/>
</dbReference>
<dbReference type="GO" id="GO:0035641">
    <property type="term" value="P:locomotory exploration behavior"/>
    <property type="evidence" value="ECO:0007669"/>
    <property type="project" value="Ensembl"/>
</dbReference>
<dbReference type="GO" id="GO:0015909">
    <property type="term" value="P:long-chain fatty acid transport"/>
    <property type="evidence" value="ECO:0007669"/>
    <property type="project" value="Ensembl"/>
</dbReference>
<dbReference type="GO" id="GO:0007616">
    <property type="term" value="P:long-term memory"/>
    <property type="evidence" value="ECO:0007669"/>
    <property type="project" value="Ensembl"/>
</dbReference>
<dbReference type="GO" id="GO:0032438">
    <property type="term" value="P:melanosome organization"/>
    <property type="evidence" value="ECO:0000250"/>
    <property type="project" value="UniProtKB"/>
</dbReference>
<dbReference type="GO" id="GO:1902430">
    <property type="term" value="P:negative regulation of amyloid-beta formation"/>
    <property type="evidence" value="ECO:0007669"/>
    <property type="project" value="Ensembl"/>
</dbReference>
<dbReference type="GO" id="GO:0043537">
    <property type="term" value="P:negative regulation of blood vessel endothelial cell migration"/>
    <property type="evidence" value="ECO:0007669"/>
    <property type="project" value="Ensembl"/>
</dbReference>
<dbReference type="GO" id="GO:0090090">
    <property type="term" value="P:negative regulation of canonical Wnt signaling pathway"/>
    <property type="evidence" value="ECO:0007669"/>
    <property type="project" value="Ensembl"/>
</dbReference>
<dbReference type="GO" id="GO:0045541">
    <property type="term" value="P:negative regulation of cholesterol biosynthetic process"/>
    <property type="evidence" value="ECO:0007669"/>
    <property type="project" value="Ensembl"/>
</dbReference>
<dbReference type="GO" id="GO:0001937">
    <property type="term" value="P:negative regulation of endothelial cell proliferation"/>
    <property type="evidence" value="ECO:0007669"/>
    <property type="project" value="Ensembl"/>
</dbReference>
<dbReference type="GO" id="GO:0050728">
    <property type="term" value="P:negative regulation of inflammatory response"/>
    <property type="evidence" value="ECO:0007669"/>
    <property type="project" value="Ensembl"/>
</dbReference>
<dbReference type="GO" id="GO:1900272">
    <property type="term" value="P:negative regulation of long-term synaptic potentiation"/>
    <property type="evidence" value="ECO:0007669"/>
    <property type="project" value="Ensembl"/>
</dbReference>
<dbReference type="GO" id="GO:0010977">
    <property type="term" value="P:negative regulation of neuron projection development"/>
    <property type="evidence" value="ECO:0007669"/>
    <property type="project" value="Ensembl"/>
</dbReference>
<dbReference type="GO" id="GO:0010544">
    <property type="term" value="P:negative regulation of platelet activation"/>
    <property type="evidence" value="ECO:0007669"/>
    <property type="project" value="Ensembl"/>
</dbReference>
<dbReference type="GO" id="GO:0050709">
    <property type="term" value="P:negative regulation of protein secretion"/>
    <property type="evidence" value="ECO:0007669"/>
    <property type="project" value="Ensembl"/>
</dbReference>
<dbReference type="GO" id="GO:0031175">
    <property type="term" value="P:neuron projection development"/>
    <property type="evidence" value="ECO:0007669"/>
    <property type="project" value="Ensembl"/>
</dbReference>
<dbReference type="GO" id="GO:0038060">
    <property type="term" value="P:nitric oxide-cGMP-mediated signaling"/>
    <property type="evidence" value="ECO:0007669"/>
    <property type="project" value="Ensembl"/>
</dbReference>
<dbReference type="GO" id="GO:0097114">
    <property type="term" value="P:NMDA glutamate receptor clustering"/>
    <property type="evidence" value="ECO:0007669"/>
    <property type="project" value="Ensembl"/>
</dbReference>
<dbReference type="GO" id="GO:0033700">
    <property type="term" value="P:phospholipid efflux"/>
    <property type="evidence" value="ECO:0007669"/>
    <property type="project" value="Ensembl"/>
</dbReference>
<dbReference type="GO" id="GO:0044794">
    <property type="term" value="P:positive regulation by host of viral process"/>
    <property type="evidence" value="ECO:0007669"/>
    <property type="project" value="Ensembl"/>
</dbReference>
<dbReference type="GO" id="GO:0010875">
    <property type="term" value="P:positive regulation of cholesterol efflux"/>
    <property type="evidence" value="ECO:0007669"/>
    <property type="project" value="Ensembl"/>
</dbReference>
<dbReference type="GO" id="GO:0090205">
    <property type="term" value="P:positive regulation of cholesterol metabolic process"/>
    <property type="evidence" value="ECO:0007669"/>
    <property type="project" value="Ensembl"/>
</dbReference>
<dbReference type="GO" id="GO:0060999">
    <property type="term" value="P:positive regulation of dendritic spine development"/>
    <property type="evidence" value="ECO:0007669"/>
    <property type="project" value="Ensembl"/>
</dbReference>
<dbReference type="GO" id="GO:1902952">
    <property type="term" value="P:positive regulation of dendritic spine maintenance"/>
    <property type="evidence" value="ECO:0007669"/>
    <property type="project" value="Ensembl"/>
</dbReference>
<dbReference type="GO" id="GO:0045893">
    <property type="term" value="P:positive regulation of DNA-templated transcription"/>
    <property type="evidence" value="ECO:0007669"/>
    <property type="project" value="Ensembl"/>
</dbReference>
<dbReference type="GO" id="GO:0045807">
    <property type="term" value="P:positive regulation of endocytosis"/>
    <property type="evidence" value="ECO:0007669"/>
    <property type="project" value="Ensembl"/>
</dbReference>
<dbReference type="GO" id="GO:0070374">
    <property type="term" value="P:positive regulation of ERK1 and ERK2 cascade"/>
    <property type="evidence" value="ECO:0007669"/>
    <property type="project" value="Ensembl"/>
</dbReference>
<dbReference type="GO" id="GO:0046889">
    <property type="term" value="P:positive regulation of lipid biosynthetic process"/>
    <property type="evidence" value="ECO:0007669"/>
    <property type="project" value="Ensembl"/>
</dbReference>
<dbReference type="GO" id="GO:1903002">
    <property type="term" value="P:positive regulation of lipid transport across blood-brain barrier"/>
    <property type="evidence" value="ECO:0007669"/>
    <property type="project" value="Ensembl"/>
</dbReference>
<dbReference type="GO" id="GO:0140077">
    <property type="term" value="P:positive regulation of lipoprotein transport"/>
    <property type="evidence" value="ECO:0007669"/>
    <property type="project" value="Ensembl"/>
</dbReference>
<dbReference type="GO" id="GO:0032805">
    <property type="term" value="P:positive regulation of low-density lipoprotein particle receptor catabolic process"/>
    <property type="evidence" value="ECO:0007669"/>
    <property type="project" value="Ensembl"/>
</dbReference>
<dbReference type="GO" id="GO:0051044">
    <property type="term" value="P:positive regulation of membrane protein ectodomain proteolysis"/>
    <property type="evidence" value="ECO:0007669"/>
    <property type="project" value="Ensembl"/>
</dbReference>
<dbReference type="GO" id="GO:0010976">
    <property type="term" value="P:positive regulation of neuron projection development"/>
    <property type="evidence" value="ECO:0007669"/>
    <property type="project" value="Ensembl"/>
</dbReference>
<dbReference type="GO" id="GO:0045429">
    <property type="term" value="P:positive regulation of nitric oxide biosynthetic process"/>
    <property type="evidence" value="ECO:0007669"/>
    <property type="project" value="Ensembl"/>
</dbReference>
<dbReference type="GO" id="GO:1902995">
    <property type="term" value="P:positive regulation of phospholipid efflux"/>
    <property type="evidence" value="ECO:0007669"/>
    <property type="project" value="Ensembl"/>
</dbReference>
<dbReference type="GO" id="GO:0017038">
    <property type="term" value="P:protein import"/>
    <property type="evidence" value="ECO:0007669"/>
    <property type="project" value="Ensembl"/>
</dbReference>
<dbReference type="GO" id="GO:0006898">
    <property type="term" value="P:receptor-mediated endocytosis"/>
    <property type="evidence" value="ECO:0007669"/>
    <property type="project" value="Ensembl"/>
</dbReference>
<dbReference type="GO" id="GO:1905906">
    <property type="term" value="P:regulation of amyloid fibril formation"/>
    <property type="evidence" value="ECO:0007669"/>
    <property type="project" value="Ensembl"/>
</dbReference>
<dbReference type="GO" id="GO:1900221">
    <property type="term" value="P:regulation of amyloid-beta clearance"/>
    <property type="evidence" value="ECO:0007669"/>
    <property type="project" value="Ensembl"/>
</dbReference>
<dbReference type="GO" id="GO:2000822">
    <property type="term" value="P:regulation of behavioral fear response"/>
    <property type="evidence" value="ECO:0007669"/>
    <property type="project" value="Ensembl"/>
</dbReference>
<dbReference type="GO" id="GO:0032489">
    <property type="term" value="P:regulation of Cdc42 protein signal transduction"/>
    <property type="evidence" value="ECO:0007669"/>
    <property type="project" value="Ensembl"/>
</dbReference>
<dbReference type="GO" id="GO:1905890">
    <property type="term" value="P:regulation of cellular response to very-low-density lipoprotein particle stimulus"/>
    <property type="evidence" value="ECO:0007669"/>
    <property type="project" value="Ensembl"/>
</dbReference>
<dbReference type="GO" id="GO:0061136">
    <property type="term" value="P:regulation of proteasomal protein catabolic process"/>
    <property type="evidence" value="ECO:0007669"/>
    <property type="project" value="Ensembl"/>
</dbReference>
<dbReference type="GO" id="GO:0043254">
    <property type="term" value="P:regulation of protein-containing complex assembly"/>
    <property type="evidence" value="ECO:0007669"/>
    <property type="project" value="Ensembl"/>
</dbReference>
<dbReference type="GO" id="GO:0061771">
    <property type="term" value="P:response to caloric restriction"/>
    <property type="evidence" value="ECO:0007669"/>
    <property type="project" value="Ensembl"/>
</dbReference>
<dbReference type="GO" id="GO:0043691">
    <property type="term" value="P:reverse cholesterol transport"/>
    <property type="evidence" value="ECO:0007669"/>
    <property type="project" value="Ensembl"/>
</dbReference>
<dbReference type="GO" id="GO:0006641">
    <property type="term" value="P:triglyceride metabolic process"/>
    <property type="evidence" value="ECO:0007669"/>
    <property type="project" value="Ensembl"/>
</dbReference>
<dbReference type="GO" id="GO:0071830">
    <property type="term" value="P:triglyceride-rich lipoprotein particle clearance"/>
    <property type="evidence" value="ECO:0000250"/>
    <property type="project" value="UniProtKB"/>
</dbReference>
<dbReference type="GO" id="GO:0034447">
    <property type="term" value="P:very-low-density lipoprotein particle clearance"/>
    <property type="evidence" value="ECO:0000250"/>
    <property type="project" value="UniProtKB"/>
</dbReference>
<dbReference type="GO" id="GO:0034372">
    <property type="term" value="P:very-low-density lipoprotein particle remodeling"/>
    <property type="evidence" value="ECO:0007669"/>
    <property type="project" value="Ensembl"/>
</dbReference>
<dbReference type="GO" id="GO:0019068">
    <property type="term" value="P:virion assembly"/>
    <property type="evidence" value="ECO:0007669"/>
    <property type="project" value="Ensembl"/>
</dbReference>
<dbReference type="FunFam" id="1.20.120.20:FF:000002">
    <property type="entry name" value="Apolipoprotein E"/>
    <property type="match status" value="1"/>
</dbReference>
<dbReference type="FunFam" id="1.20.120.20:FF:000003">
    <property type="entry name" value="Apolipoprotein E"/>
    <property type="match status" value="1"/>
</dbReference>
<dbReference type="Gene3D" id="1.20.120.20">
    <property type="entry name" value="Apolipoprotein"/>
    <property type="match status" value="2"/>
</dbReference>
<dbReference type="InterPro" id="IPR000074">
    <property type="entry name" value="ApoA_E"/>
</dbReference>
<dbReference type="InterPro" id="IPR050163">
    <property type="entry name" value="Apolipoprotein_A1/A4/E"/>
</dbReference>
<dbReference type="PANTHER" id="PTHR18976">
    <property type="entry name" value="APOLIPOPROTEIN"/>
    <property type="match status" value="1"/>
</dbReference>
<dbReference type="PANTHER" id="PTHR18976:SF2">
    <property type="entry name" value="APOLIPOPROTEIN E"/>
    <property type="match status" value="1"/>
</dbReference>
<dbReference type="Pfam" id="PF01442">
    <property type="entry name" value="Apolipoprotein"/>
    <property type="match status" value="1"/>
</dbReference>
<dbReference type="SUPFAM" id="SSF58113">
    <property type="entry name" value="Apolipoprotein A-I"/>
    <property type="match status" value="1"/>
</dbReference>
<feature type="signal peptide" evidence="4">
    <location>
        <begin position="1"/>
        <end position="18"/>
    </location>
</feature>
<feature type="chain" id="PRO_0000429978" description="Apolipoprotein E">
    <location>
        <begin position="19"/>
        <end position="317"/>
    </location>
</feature>
<feature type="repeat" description="1">
    <location>
        <begin position="80"/>
        <end position="101"/>
    </location>
</feature>
<feature type="repeat" description="2">
    <location>
        <begin position="102"/>
        <end position="123"/>
    </location>
</feature>
<feature type="repeat" description="3">
    <location>
        <begin position="124"/>
        <end position="145"/>
    </location>
</feature>
<feature type="repeat" description="4">
    <location>
        <begin position="146"/>
        <end position="167"/>
    </location>
</feature>
<feature type="repeat" description="5">
    <location>
        <begin position="168"/>
        <end position="189"/>
    </location>
</feature>
<feature type="repeat" description="6">
    <location>
        <begin position="190"/>
        <end position="211"/>
    </location>
</feature>
<feature type="repeat" description="7">
    <location>
        <begin position="212"/>
        <end position="233"/>
    </location>
</feature>
<feature type="repeat" description="8">
    <location>
        <begin position="234"/>
        <end position="255"/>
    </location>
</feature>
<feature type="region of interest" description="8 X 22 AA approximate tandem repeats" evidence="1">
    <location>
        <begin position="80"/>
        <end position="255"/>
    </location>
</feature>
<feature type="region of interest" description="LDL and other lipoprotein receptors binding" evidence="2">
    <location>
        <begin position="158"/>
        <end position="168"/>
    </location>
</feature>
<feature type="region of interest" description="Lipid-binding and lipoprotein association" evidence="2">
    <location>
        <begin position="210"/>
        <end position="290"/>
    </location>
</feature>
<feature type="region of interest" description="Homooligomerization" evidence="2">
    <location>
        <begin position="266"/>
        <end position="317"/>
    </location>
</feature>
<feature type="region of interest" description="Specificity for association with VLDL" evidence="2">
    <location>
        <begin position="278"/>
        <end position="290"/>
    </location>
</feature>
<feature type="binding site" evidence="2">
    <location>
        <begin position="162"/>
        <end position="165"/>
    </location>
    <ligand>
        <name>heparin</name>
        <dbReference type="ChEBI" id="CHEBI:28304"/>
    </ligand>
</feature>
<feature type="binding site" evidence="2">
    <location>
        <begin position="229"/>
        <end position="236"/>
    </location>
    <ligand>
        <name>heparin</name>
        <dbReference type="ChEBI" id="CHEBI:28304"/>
    </ligand>
</feature>
<feature type="modified residue" description="Methionine sulfoxide" evidence="3">
    <location>
        <position position="143"/>
    </location>
</feature>
<name>APOE_PHYMC</name>
<organism>
    <name type="scientific">Physeter macrocephalus</name>
    <name type="common">Sperm whale</name>
    <name type="synonym">Physeter catodon</name>
    <dbReference type="NCBI Taxonomy" id="9755"/>
    <lineage>
        <taxon>Eukaryota</taxon>
        <taxon>Metazoa</taxon>
        <taxon>Chordata</taxon>
        <taxon>Craniata</taxon>
        <taxon>Vertebrata</taxon>
        <taxon>Euteleostomi</taxon>
        <taxon>Mammalia</taxon>
        <taxon>Eutheria</taxon>
        <taxon>Laurasiatheria</taxon>
        <taxon>Artiodactyla</taxon>
        <taxon>Whippomorpha</taxon>
        <taxon>Cetacea</taxon>
        <taxon>Odontoceti</taxon>
        <taxon>Physeteridae</taxon>
        <taxon>Physeter</taxon>
    </lineage>
</organism>
<gene>
    <name type="primary">APOE</name>
</gene>
<evidence type="ECO:0000250" key="1"/>
<evidence type="ECO:0000250" key="2">
    <source>
        <dbReference type="UniProtKB" id="P02649"/>
    </source>
</evidence>
<evidence type="ECO:0000250" key="3">
    <source>
        <dbReference type="UniProtKB" id="P08226"/>
    </source>
</evidence>
<evidence type="ECO:0000255" key="4"/>
<evidence type="ECO:0000305" key="5"/>
<reference key="1">
    <citation type="submission" date="2013-09" db="EMBL/GenBank/DDBJ databases">
        <authorList>
            <person name="Walter R."/>
            <person name="Wise J."/>
            <person name="Warren W."/>
            <person name="Wilson R.K."/>
        </authorList>
    </citation>
    <scope>NUCLEOTIDE SEQUENCE [LARGE SCALE GENOMIC DNA]</scope>
</reference>
<reference key="2">
    <citation type="unpublished observations" date="2014-06">
        <authorList>
            <person name="Puppione D.L."/>
        </authorList>
    </citation>
    <scope>IDENTIFICATION</scope>
</reference>
<proteinExistence type="inferred from homology"/>
<keyword id="KW-0162">Chylomicron</keyword>
<keyword id="KW-0967">Endosome</keyword>
<keyword id="KW-0272">Extracellular matrix</keyword>
<keyword id="KW-0325">Glycoprotein</keyword>
<keyword id="KW-0345">HDL</keyword>
<keyword id="KW-0358">Heparin-binding</keyword>
<keyword id="KW-0445">Lipid transport</keyword>
<keyword id="KW-0446">Lipid-binding</keyword>
<keyword id="KW-0558">Oxidation</keyword>
<keyword id="KW-0597">Phosphoprotein</keyword>
<keyword id="KW-1185">Reference proteome</keyword>
<keyword id="KW-0677">Repeat</keyword>
<keyword id="KW-0964">Secreted</keyword>
<keyword id="KW-0732">Signal</keyword>
<keyword id="KW-0813">Transport</keyword>
<keyword id="KW-0850">VLDL</keyword>
<comment type="function">
    <text evidence="2">APOE is an apolipoprotein, a protein associating with lipid particles, that mainly functions in lipoprotein-mediated lipid transport between organs via the plasma and interstitial fluids. APOE is a core component of plasma lipoproteins and is involved in their production, conversion and clearance. Apolipoproteins are amphipathic molecules that interact both with lipids of the lipoprotein particle core and the aqueous environment of the plasma. As such, APOE associates with chylomicrons, chylomicron remnants, very low density lipoproteins (VLDL) and intermediate density lipoproteins (IDL) but shows a preferential binding to high-density lipoproteins (HDL). It also binds a wide range of cellular receptors including the LDL receptor/LDLR and the very low-density lipoprotein receptor/VLDLR that mediate the cellular uptake of the APOE-containing lipoprotein particles. Finally, APOE also has a heparin-binding activity and binds heparan-sulfate proteoglycans on the surface of cells, a property that supports the capture and the receptor-mediated uptake of APOE-containing lipoproteins by cells.</text>
</comment>
<comment type="subunit">
    <text evidence="2">Homotetramer. May interact with ABCA1; functionally associated with ABCA1 in the biogenesis of HDLs. May interact with APP/A4 amyloid-beta peptide; the interaction is extremely stable in vitro but its physiological significance is unclear. May interact with MAPT. May interact with MAP2. In the cerebrospinal fluid, interacts with secreted SORL1. Interacts with PMEL; this allows the loading of PMEL luminal fragment on ILVs to induce fibril nucleation.</text>
</comment>
<comment type="subcellular location">
    <subcellularLocation>
        <location evidence="2">Secreted</location>
    </subcellularLocation>
    <subcellularLocation>
        <location evidence="2">Secreted</location>
        <location evidence="2">Extracellular space</location>
    </subcellularLocation>
    <subcellularLocation>
        <location evidence="2">Secreted</location>
        <location evidence="2">Extracellular space</location>
        <location evidence="2">Extracellular matrix</location>
    </subcellularLocation>
    <subcellularLocation>
        <location evidence="2">Extracellular vesicle</location>
    </subcellularLocation>
    <subcellularLocation>
        <location evidence="2">Endosome</location>
        <location evidence="2">Multivesicular body</location>
    </subcellularLocation>
    <text evidence="2">In the plasma, APOE is associated with chylomicrons, chylomicrons remnants, VLDL, LDL and HDL lipoproteins. Lipid poor oligomeric APOE is associated with the extracellular matrix in a calcium- and heparan-sulfate proteoglycans-dependent manner. Lipidation induces the release from the extracellular matrix. Colocalizes with CD63 and PMEL at exosomes and in intraluminal vesicles within multivesicular endosomes.</text>
</comment>
<comment type="PTM">
    <text evidence="2">APOE exists as multiple glycosylated and sialylated glycoforms within cells and in plasma. The extent of glycosylation and sialylation are tissue and context specific.</text>
</comment>
<comment type="PTM">
    <text evidence="2">Glycated in plasma VLDL.</text>
</comment>
<comment type="PTM">
    <text evidence="2">Phosphorylated by FAM20C in the extracellular medium.</text>
</comment>
<comment type="similarity">
    <text evidence="5">Belongs to the apolipoprotein A1/A4/E family.</text>
</comment>
<accession>P0DMM0</accession>
<protein>
    <recommendedName>
        <fullName>Apolipoprotein E</fullName>
        <shortName>Apo-E</shortName>
    </recommendedName>
</protein>
<sequence>MKVLWVALVITLLAGCQAEEVKPAPEPEVQLGQEWPGWQGSQPWEQALGRFWDYLRWVQTLSDQVQEELLSTQVIQELTVLMDETMKEVKAYREELEEQLGPVAQETQARVSKELQAAQARLASDMQDVRGRLAQYRSEVQAMMGHTTDELRDRLASHLRKLRKRLLRDAEDLQKRLAVYRAGALEGSERSVSAIRERLGPLVEQGRARAATVGTLASQTLRERAEAWHQKLRGRVEEMGTQARDHLEEMREQLDEVRAKVEEQGTQMRLQAEAFQARLKSWFEPLVEDMQRQWAGLVEKVQLAMATSSTSAPSENH</sequence>